<dbReference type="EMBL" id="AC118196">
    <property type="status" value="NOT_ANNOTATED_CDS"/>
    <property type="molecule type" value="Genomic_DNA"/>
</dbReference>
<dbReference type="EMBL" id="U23807">
    <property type="protein sequence ID" value="AAA86386.1"/>
    <property type="molecule type" value="Genomic_DNA"/>
</dbReference>
<dbReference type="CCDS" id="CCDS48214.1"/>
<dbReference type="RefSeq" id="NP_034472.1">
    <property type="nucleotide sequence ID" value="NM_010342.1"/>
</dbReference>
<dbReference type="SMR" id="P49681"/>
<dbReference type="CORUM" id="P49681"/>
<dbReference type="FunCoup" id="P49681">
    <property type="interactions" value="452"/>
</dbReference>
<dbReference type="STRING" id="10090.ENSMUSP00000046233"/>
<dbReference type="BindingDB" id="P49681"/>
<dbReference type="ChEMBL" id="CHEMBL1938219"/>
<dbReference type="GlyCosmos" id="P49681">
    <property type="glycosylation" value="3 sites, No reported glycans"/>
</dbReference>
<dbReference type="GlyGen" id="P49681">
    <property type="glycosylation" value="3 sites"/>
</dbReference>
<dbReference type="iPTMnet" id="P49681"/>
<dbReference type="PhosphoSitePlus" id="P49681"/>
<dbReference type="PaxDb" id="10090-ENSMUSP00000046233"/>
<dbReference type="Antibodypedia" id="82634">
    <property type="antibodies" value="225 antibodies from 29 providers"/>
</dbReference>
<dbReference type="Ensembl" id="ENSMUST00000044180.5">
    <property type="protein sequence ID" value="ENSMUSP00000046233.5"/>
    <property type="gene ID" value="ENSMUSG00000033774.5"/>
</dbReference>
<dbReference type="GeneID" id="226304"/>
<dbReference type="KEGG" id="mmu:226304"/>
<dbReference type="UCSC" id="uc011whw.1">
    <property type="organism name" value="mouse"/>
</dbReference>
<dbReference type="AGR" id="MGI:891989"/>
<dbReference type="CTD" id="2831"/>
<dbReference type="MGI" id="MGI:891989">
    <property type="gene designation" value="Npbwr1"/>
</dbReference>
<dbReference type="VEuPathDB" id="HostDB:ENSMUSG00000033774"/>
<dbReference type="eggNOG" id="KOG3656">
    <property type="taxonomic scope" value="Eukaryota"/>
</dbReference>
<dbReference type="GeneTree" id="ENSGT00940000161936"/>
<dbReference type="HOGENOM" id="CLU_009579_8_1_1"/>
<dbReference type="InParanoid" id="P49681"/>
<dbReference type="OMA" id="YKLRHMH"/>
<dbReference type="OrthoDB" id="6076970at2759"/>
<dbReference type="PhylomeDB" id="P49681"/>
<dbReference type="TreeFam" id="TF315737"/>
<dbReference type="Reactome" id="R-MMU-375276">
    <property type="pathway name" value="Peptide ligand-binding receptors"/>
</dbReference>
<dbReference type="Reactome" id="R-MMU-418594">
    <property type="pathway name" value="G alpha (i) signalling events"/>
</dbReference>
<dbReference type="BioGRID-ORCS" id="226304">
    <property type="hits" value="1 hit in 75 CRISPR screens"/>
</dbReference>
<dbReference type="PRO" id="PR:P49681"/>
<dbReference type="Proteomes" id="UP000000589">
    <property type="component" value="Chromosome 1"/>
</dbReference>
<dbReference type="RNAct" id="P49681">
    <property type="molecule type" value="protein"/>
</dbReference>
<dbReference type="Bgee" id="ENSMUSG00000033774">
    <property type="expression patterns" value="Expressed in mesodermal cell in embryo and 13 other cell types or tissues"/>
</dbReference>
<dbReference type="GO" id="GO:0005886">
    <property type="term" value="C:plasma membrane"/>
    <property type="evidence" value="ECO:0007669"/>
    <property type="project" value="UniProtKB-SubCell"/>
</dbReference>
<dbReference type="GO" id="GO:0008188">
    <property type="term" value="F:neuropeptide receptor activity"/>
    <property type="evidence" value="ECO:0007669"/>
    <property type="project" value="InterPro"/>
</dbReference>
<dbReference type="GO" id="GO:0019222">
    <property type="term" value="P:regulation of metabolic process"/>
    <property type="evidence" value="ECO:0000315"/>
    <property type="project" value="MGI"/>
</dbReference>
<dbReference type="CDD" id="cd15087">
    <property type="entry name" value="7tmA_NPBWR"/>
    <property type="match status" value="1"/>
</dbReference>
<dbReference type="FunFam" id="1.20.1070.10:FF:000102">
    <property type="entry name" value="neuropeptides B/W receptor type 1"/>
    <property type="match status" value="1"/>
</dbReference>
<dbReference type="Gene3D" id="1.20.1070.10">
    <property type="entry name" value="Rhodopsin 7-helix transmembrane proteins"/>
    <property type="match status" value="1"/>
</dbReference>
<dbReference type="InterPro" id="IPR000276">
    <property type="entry name" value="GPCR_Rhodpsn"/>
</dbReference>
<dbReference type="InterPro" id="IPR017452">
    <property type="entry name" value="GPCR_Rhodpsn_7TM"/>
</dbReference>
<dbReference type="InterPro" id="IPR009150">
    <property type="entry name" value="Neuropept_B/W_rcpt"/>
</dbReference>
<dbReference type="PANTHER" id="PTHR24229:SF47">
    <property type="entry name" value="NEUROPEPTIDES B_W RECEPTOR TYPE 1"/>
    <property type="match status" value="1"/>
</dbReference>
<dbReference type="PANTHER" id="PTHR24229">
    <property type="entry name" value="NEUROPEPTIDES RECEPTOR"/>
    <property type="match status" value="1"/>
</dbReference>
<dbReference type="Pfam" id="PF00001">
    <property type="entry name" value="7tm_1"/>
    <property type="match status" value="1"/>
</dbReference>
<dbReference type="PRINTS" id="PR00237">
    <property type="entry name" value="GPCRRHODOPSN"/>
</dbReference>
<dbReference type="PRINTS" id="PR01855">
    <property type="entry name" value="NRPEPTIDEWR"/>
</dbReference>
<dbReference type="SUPFAM" id="SSF81321">
    <property type="entry name" value="Family A G protein-coupled receptor-like"/>
    <property type="match status" value="1"/>
</dbReference>
<dbReference type="PROSITE" id="PS00237">
    <property type="entry name" value="G_PROTEIN_RECEP_F1_1"/>
    <property type="match status" value="1"/>
</dbReference>
<dbReference type="PROSITE" id="PS50262">
    <property type="entry name" value="G_PROTEIN_RECEP_F1_2"/>
    <property type="match status" value="1"/>
</dbReference>
<keyword id="KW-1003">Cell membrane</keyword>
<keyword id="KW-1015">Disulfide bond</keyword>
<keyword id="KW-0297">G-protein coupled receptor</keyword>
<keyword id="KW-0325">Glycoprotein</keyword>
<keyword id="KW-0472">Membrane</keyword>
<keyword id="KW-0675">Receptor</keyword>
<keyword id="KW-1185">Reference proteome</keyword>
<keyword id="KW-0807">Transducer</keyword>
<keyword id="KW-0812">Transmembrane</keyword>
<keyword id="KW-1133">Transmembrane helix</keyword>
<proteinExistence type="inferred from homology"/>
<gene>
    <name type="primary">Npbwr1</name>
    <name type="synonym">Gpr7</name>
</gene>
<name>NPBW1_MOUSE</name>
<protein>
    <recommendedName>
        <fullName>Neuropeptides B/W receptor type 1</fullName>
    </recommendedName>
    <alternativeName>
        <fullName>G-protein coupled receptor 7</fullName>
    </alternativeName>
</protein>
<evidence type="ECO:0000250" key="1"/>
<evidence type="ECO:0000255" key="2"/>
<evidence type="ECO:0000255" key="3">
    <source>
        <dbReference type="PROSITE-ProRule" id="PRU00521"/>
    </source>
</evidence>
<comment type="function">
    <text evidence="1">Interacts specifically with a number of opioid ligands. Receptor for neuropeptides B and W, which may be involved in neuroendocrine system regulation, food intake and the organization of other signals (By similarity).</text>
</comment>
<comment type="subcellular location">
    <subcellularLocation>
        <location>Cell membrane</location>
        <topology>Multi-pass membrane protein</topology>
    </subcellularLocation>
</comment>
<comment type="similarity">
    <text evidence="3">Belongs to the G-protein coupled receptor 1 family.</text>
</comment>
<organism>
    <name type="scientific">Mus musculus</name>
    <name type="common">Mouse</name>
    <dbReference type="NCBI Taxonomy" id="10090"/>
    <lineage>
        <taxon>Eukaryota</taxon>
        <taxon>Metazoa</taxon>
        <taxon>Chordata</taxon>
        <taxon>Craniata</taxon>
        <taxon>Vertebrata</taxon>
        <taxon>Euteleostomi</taxon>
        <taxon>Mammalia</taxon>
        <taxon>Eutheria</taxon>
        <taxon>Euarchontoglires</taxon>
        <taxon>Glires</taxon>
        <taxon>Rodentia</taxon>
        <taxon>Myomorpha</taxon>
        <taxon>Muroidea</taxon>
        <taxon>Muridae</taxon>
        <taxon>Murinae</taxon>
        <taxon>Mus</taxon>
        <taxon>Mus</taxon>
    </lineage>
</organism>
<sequence length="329" mass="36076">MHNLTLFESGGDNVSCGGSSLGCPNGSSLAPLPLPQPLAVAVPVVYGVICAVGLAGNSAVLYVLLRTPRMKTVTNVFILNLAIADELFTLVLPINIADFLLRRWPFGEVMCKLIVAVDQYNTFSSLYFLAVMSADRYLVVLATAESRRVSGRTYGAARAVSLAVWALVTLVVLPFAVFARLDEEQGRRQCVLVFPQPEAFWWRASRLYTLVLGFAIPVTTICALYTTLLCRLRAIQLDSHAKALDRAKKRVTLLVAAILAVCLLCWTPYHLSTIVALTTDLPQTPLVIGISYFITSLSYANSCLNPFLYAFLDDSFRRSLRQLVSCRSA</sequence>
<reference key="1">
    <citation type="journal article" date="2009" name="PLoS Biol.">
        <title>Lineage-specific biology revealed by a finished genome assembly of the mouse.</title>
        <authorList>
            <person name="Church D.M."/>
            <person name="Goodstadt L."/>
            <person name="Hillier L.W."/>
            <person name="Zody M.C."/>
            <person name="Goldstein S."/>
            <person name="She X."/>
            <person name="Bult C.J."/>
            <person name="Agarwala R."/>
            <person name="Cherry J.L."/>
            <person name="DiCuccio M."/>
            <person name="Hlavina W."/>
            <person name="Kapustin Y."/>
            <person name="Meric P."/>
            <person name="Maglott D."/>
            <person name="Birtle Z."/>
            <person name="Marques A.C."/>
            <person name="Graves T."/>
            <person name="Zhou S."/>
            <person name="Teague B."/>
            <person name="Potamousis K."/>
            <person name="Churas C."/>
            <person name="Place M."/>
            <person name="Herschleb J."/>
            <person name="Runnheim R."/>
            <person name="Forrest D."/>
            <person name="Amos-Landgraf J."/>
            <person name="Schwartz D.C."/>
            <person name="Cheng Z."/>
            <person name="Lindblad-Toh K."/>
            <person name="Eichler E.E."/>
            <person name="Ponting C.P."/>
        </authorList>
    </citation>
    <scope>NUCLEOTIDE SEQUENCE [LARGE SCALE GENOMIC DNA]</scope>
    <source>
        <strain>C57BL/6J</strain>
    </source>
</reference>
<reference key="2">
    <citation type="journal article" date="1995" name="Genomics">
        <title>The cloning and chromosomal mapping of two novel human opioid-somatostatin-like receptor genes, GPR7 and GPR8, expressed in discrete areas of the brain.</title>
        <authorList>
            <person name="O'Dowd B.F."/>
            <person name="Scheideler M.A."/>
            <person name="Nguyen T."/>
            <person name="Cheng R."/>
            <person name="Rasmussen J.S."/>
            <person name="Marchese A."/>
            <person name="Zastawny R."/>
            <person name="Heng H.H.Q."/>
            <person name="Tsui L.-C."/>
            <person name="Shi X."/>
            <person name="Asa S."/>
            <person name="Puy L."/>
            <person name="George S.R."/>
        </authorList>
    </citation>
    <scope>NUCLEOTIDE SEQUENCE [GENOMIC DNA] OF 76-221</scope>
</reference>
<feature type="chain" id="PRO_0000069519" description="Neuropeptides B/W receptor type 1">
    <location>
        <begin position="1"/>
        <end position="329"/>
    </location>
</feature>
<feature type="topological domain" description="Extracellular" evidence="2">
    <location>
        <begin position="1"/>
        <end position="43"/>
    </location>
</feature>
<feature type="transmembrane region" description="Helical; Name=1" evidence="2">
    <location>
        <begin position="44"/>
        <end position="64"/>
    </location>
</feature>
<feature type="topological domain" description="Cytoplasmic" evidence="2">
    <location>
        <begin position="65"/>
        <end position="75"/>
    </location>
</feature>
<feature type="transmembrane region" description="Helical; Name=2" evidence="2">
    <location>
        <begin position="76"/>
        <end position="96"/>
    </location>
</feature>
<feature type="topological domain" description="Extracellular" evidence="2">
    <location>
        <begin position="97"/>
        <end position="112"/>
    </location>
</feature>
<feature type="transmembrane region" description="Helical; Name=3" evidence="2">
    <location>
        <begin position="113"/>
        <end position="133"/>
    </location>
</feature>
<feature type="topological domain" description="Cytoplasmic" evidence="2">
    <location>
        <begin position="134"/>
        <end position="158"/>
    </location>
</feature>
<feature type="transmembrane region" description="Helical; Name=4" evidence="2">
    <location>
        <begin position="159"/>
        <end position="179"/>
    </location>
</feature>
<feature type="topological domain" description="Extracellular" evidence="2">
    <location>
        <begin position="180"/>
        <end position="209"/>
    </location>
</feature>
<feature type="transmembrane region" description="Helical; Name=5" evidence="2">
    <location>
        <begin position="210"/>
        <end position="230"/>
    </location>
</feature>
<feature type="topological domain" description="Cytoplasmic" evidence="2">
    <location>
        <begin position="231"/>
        <end position="250"/>
    </location>
</feature>
<feature type="transmembrane region" description="Helical; Name=6" evidence="2">
    <location>
        <begin position="251"/>
        <end position="271"/>
    </location>
</feature>
<feature type="topological domain" description="Extracellular" evidence="2">
    <location>
        <begin position="272"/>
        <end position="289"/>
    </location>
</feature>
<feature type="transmembrane region" description="Helical; Name=7" evidence="2">
    <location>
        <begin position="290"/>
        <end position="312"/>
    </location>
</feature>
<feature type="topological domain" description="Cytoplasmic" evidence="2">
    <location>
        <begin position="313"/>
        <end position="329"/>
    </location>
</feature>
<feature type="glycosylation site" description="N-linked (GlcNAc...) asparagine" evidence="2">
    <location>
        <position position="3"/>
    </location>
</feature>
<feature type="glycosylation site" description="N-linked (GlcNAc...) asparagine" evidence="2">
    <location>
        <position position="13"/>
    </location>
</feature>
<feature type="glycosylation site" description="N-linked (GlcNAc...) asparagine" evidence="2">
    <location>
        <position position="25"/>
    </location>
</feature>
<feature type="disulfide bond" evidence="3">
    <location>
        <begin position="111"/>
        <end position="190"/>
    </location>
</feature>
<accession>P49681</accession>